<gene>
    <name evidence="1" type="primary">hslU</name>
    <name type="ordered locus">HRM2_27590</name>
</gene>
<keyword id="KW-0067">ATP-binding</keyword>
<keyword id="KW-0143">Chaperone</keyword>
<keyword id="KW-0963">Cytoplasm</keyword>
<keyword id="KW-0547">Nucleotide-binding</keyword>
<keyword id="KW-1185">Reference proteome</keyword>
<evidence type="ECO:0000255" key="1">
    <source>
        <dbReference type="HAMAP-Rule" id="MF_00249"/>
    </source>
</evidence>
<sequence length="453" mass="50790">MSDLKPMEIVRELDRYIIGQKNAKKSVAIALRNRWRRRQVPDDLRDEIAPKNIILIGPTGVGKTEIARRLARLTDSPFYKVEASKFTEVGYVGRDVESMIRDLMELTVNTLKVRQQEEVQEKAAAMAEERILDLLLPESGGPEGATLTEPHLEVVSSSSSKSSTREKLRKMLNNGKLDSRFVDIDVTGKASPMIEIFSNTGMEEMGINMKDMLGNLLPKNTKRRKVKVAEAMKILTQDEAAHLVDMEKVTADAVEMVEQSGIIFLDEIDKIAGKGNSQGPEVSKEGVQRDLLPIVEGSSVPTKYGTVKTDHILFIASGAFHIAKPSDLIPELQGRFPIRVELTSLGKDEFVRILTEPKNALILQYIALLRTEGVELEFTEDAIDKIASIAVDVNERTENIGARRLHTIMEKLLEEILFHAPDVEEKKMVVDADFVDKQLMEIVKDEDLSRYIL</sequence>
<proteinExistence type="inferred from homology"/>
<accession>C0QJ36</accession>
<comment type="function">
    <text evidence="1">ATPase subunit of a proteasome-like degradation complex; this subunit has chaperone activity. The binding of ATP and its subsequent hydrolysis by HslU are essential for unfolding of protein substrates subsequently hydrolyzed by HslV. HslU recognizes the N-terminal part of its protein substrates and unfolds these before they are guided to HslV for hydrolysis.</text>
</comment>
<comment type="subunit">
    <text evidence="1">A double ring-shaped homohexamer of HslV is capped on each side by a ring-shaped HslU homohexamer. The assembly of the HslU/HslV complex is dependent on binding of ATP.</text>
</comment>
<comment type="subcellular location">
    <subcellularLocation>
        <location evidence="1">Cytoplasm</location>
    </subcellularLocation>
</comment>
<comment type="similarity">
    <text evidence="1">Belongs to the ClpX chaperone family. HslU subfamily.</text>
</comment>
<reference key="1">
    <citation type="journal article" date="2009" name="Environ. Microbiol.">
        <title>Genome sequence of Desulfobacterium autotrophicum HRM2, a marine sulfate reducer oxidizing organic carbon completely to carbon dioxide.</title>
        <authorList>
            <person name="Strittmatter A.W."/>
            <person name="Liesegang H."/>
            <person name="Rabus R."/>
            <person name="Decker I."/>
            <person name="Amann J."/>
            <person name="Andres S."/>
            <person name="Henne A."/>
            <person name="Fricke W.F."/>
            <person name="Martinez-Arias R."/>
            <person name="Bartels D."/>
            <person name="Goesmann A."/>
            <person name="Krause L."/>
            <person name="Puehler A."/>
            <person name="Klenk H.P."/>
            <person name="Richter M."/>
            <person name="Schuler M."/>
            <person name="Gloeckner F.O."/>
            <person name="Meyerdierks A."/>
            <person name="Gottschalk G."/>
            <person name="Amann R."/>
        </authorList>
    </citation>
    <scope>NUCLEOTIDE SEQUENCE [LARGE SCALE GENOMIC DNA]</scope>
    <source>
        <strain>ATCC 43914 / DSM 3382 / VKM B-1955 / HRM2</strain>
    </source>
</reference>
<feature type="chain" id="PRO_1000204520" description="ATP-dependent protease ATPase subunit HslU">
    <location>
        <begin position="1"/>
        <end position="453"/>
    </location>
</feature>
<feature type="binding site" evidence="1">
    <location>
        <position position="18"/>
    </location>
    <ligand>
        <name>ATP</name>
        <dbReference type="ChEBI" id="CHEBI:30616"/>
    </ligand>
</feature>
<feature type="binding site" evidence="1">
    <location>
        <begin position="60"/>
        <end position="65"/>
    </location>
    <ligand>
        <name>ATP</name>
        <dbReference type="ChEBI" id="CHEBI:30616"/>
    </ligand>
</feature>
<feature type="binding site" evidence="1">
    <location>
        <position position="266"/>
    </location>
    <ligand>
        <name>ATP</name>
        <dbReference type="ChEBI" id="CHEBI:30616"/>
    </ligand>
</feature>
<feature type="binding site" evidence="1">
    <location>
        <position position="331"/>
    </location>
    <ligand>
        <name>ATP</name>
        <dbReference type="ChEBI" id="CHEBI:30616"/>
    </ligand>
</feature>
<feature type="binding site" evidence="1">
    <location>
        <position position="403"/>
    </location>
    <ligand>
        <name>ATP</name>
        <dbReference type="ChEBI" id="CHEBI:30616"/>
    </ligand>
</feature>
<protein>
    <recommendedName>
        <fullName evidence="1">ATP-dependent protease ATPase subunit HslU</fullName>
    </recommendedName>
    <alternativeName>
        <fullName evidence="1">Unfoldase HslU</fullName>
    </alternativeName>
</protein>
<organism>
    <name type="scientific">Desulforapulum autotrophicum (strain ATCC 43914 / DSM 3382 / VKM B-1955 / HRM2)</name>
    <name type="common">Desulfobacterium autotrophicum</name>
    <dbReference type="NCBI Taxonomy" id="177437"/>
    <lineage>
        <taxon>Bacteria</taxon>
        <taxon>Pseudomonadati</taxon>
        <taxon>Thermodesulfobacteriota</taxon>
        <taxon>Desulfobacteria</taxon>
        <taxon>Desulfobacterales</taxon>
        <taxon>Desulfobacteraceae</taxon>
        <taxon>Desulforapulum</taxon>
    </lineage>
</organism>
<name>HSLU_DESAH</name>
<dbReference type="EMBL" id="CP001087">
    <property type="protein sequence ID" value="ACN15849.1"/>
    <property type="molecule type" value="Genomic_DNA"/>
</dbReference>
<dbReference type="RefSeq" id="WP_015904612.1">
    <property type="nucleotide sequence ID" value="NC_012108.1"/>
</dbReference>
<dbReference type="SMR" id="C0QJ36"/>
<dbReference type="STRING" id="177437.HRM2_27590"/>
<dbReference type="KEGG" id="dat:HRM2_27590"/>
<dbReference type="eggNOG" id="COG1220">
    <property type="taxonomic scope" value="Bacteria"/>
</dbReference>
<dbReference type="HOGENOM" id="CLU_033123_0_0_7"/>
<dbReference type="OrthoDB" id="9804062at2"/>
<dbReference type="Proteomes" id="UP000000442">
    <property type="component" value="Chromosome"/>
</dbReference>
<dbReference type="GO" id="GO:0009376">
    <property type="term" value="C:HslUV protease complex"/>
    <property type="evidence" value="ECO:0007669"/>
    <property type="project" value="UniProtKB-UniRule"/>
</dbReference>
<dbReference type="GO" id="GO:0005524">
    <property type="term" value="F:ATP binding"/>
    <property type="evidence" value="ECO:0007669"/>
    <property type="project" value="UniProtKB-UniRule"/>
</dbReference>
<dbReference type="GO" id="GO:0016887">
    <property type="term" value="F:ATP hydrolysis activity"/>
    <property type="evidence" value="ECO:0007669"/>
    <property type="project" value="InterPro"/>
</dbReference>
<dbReference type="GO" id="GO:0008233">
    <property type="term" value="F:peptidase activity"/>
    <property type="evidence" value="ECO:0007669"/>
    <property type="project" value="InterPro"/>
</dbReference>
<dbReference type="GO" id="GO:0036402">
    <property type="term" value="F:proteasome-activating activity"/>
    <property type="evidence" value="ECO:0007669"/>
    <property type="project" value="UniProtKB-UniRule"/>
</dbReference>
<dbReference type="GO" id="GO:0043335">
    <property type="term" value="P:protein unfolding"/>
    <property type="evidence" value="ECO:0007669"/>
    <property type="project" value="UniProtKB-UniRule"/>
</dbReference>
<dbReference type="GO" id="GO:0051603">
    <property type="term" value="P:proteolysis involved in protein catabolic process"/>
    <property type="evidence" value="ECO:0007669"/>
    <property type="project" value="TreeGrafter"/>
</dbReference>
<dbReference type="CDD" id="cd19498">
    <property type="entry name" value="RecA-like_HslU"/>
    <property type="match status" value="1"/>
</dbReference>
<dbReference type="FunFam" id="3.40.50.300:FF:000213">
    <property type="entry name" value="ATP-dependent protease ATPase subunit HslU"/>
    <property type="match status" value="1"/>
</dbReference>
<dbReference type="FunFam" id="3.40.50.300:FF:000220">
    <property type="entry name" value="ATP-dependent protease ATPase subunit HslU"/>
    <property type="match status" value="1"/>
</dbReference>
<dbReference type="Gene3D" id="1.10.8.60">
    <property type="match status" value="1"/>
</dbReference>
<dbReference type="Gene3D" id="3.40.50.300">
    <property type="entry name" value="P-loop containing nucleotide triphosphate hydrolases"/>
    <property type="match status" value="2"/>
</dbReference>
<dbReference type="HAMAP" id="MF_00249">
    <property type="entry name" value="HslU"/>
    <property type="match status" value="1"/>
</dbReference>
<dbReference type="InterPro" id="IPR003593">
    <property type="entry name" value="AAA+_ATPase"/>
</dbReference>
<dbReference type="InterPro" id="IPR050052">
    <property type="entry name" value="ATP-dep_Clp_protease_ClpX"/>
</dbReference>
<dbReference type="InterPro" id="IPR003959">
    <property type="entry name" value="ATPase_AAA_core"/>
</dbReference>
<dbReference type="InterPro" id="IPR019489">
    <property type="entry name" value="Clp_ATPase_C"/>
</dbReference>
<dbReference type="InterPro" id="IPR004491">
    <property type="entry name" value="HslU"/>
</dbReference>
<dbReference type="InterPro" id="IPR027417">
    <property type="entry name" value="P-loop_NTPase"/>
</dbReference>
<dbReference type="NCBIfam" id="TIGR00390">
    <property type="entry name" value="hslU"/>
    <property type="match status" value="1"/>
</dbReference>
<dbReference type="NCBIfam" id="NF003544">
    <property type="entry name" value="PRK05201.1"/>
    <property type="match status" value="1"/>
</dbReference>
<dbReference type="PANTHER" id="PTHR48102">
    <property type="entry name" value="ATP-DEPENDENT CLP PROTEASE ATP-BINDING SUBUNIT CLPX-LIKE, MITOCHONDRIAL-RELATED"/>
    <property type="match status" value="1"/>
</dbReference>
<dbReference type="PANTHER" id="PTHR48102:SF3">
    <property type="entry name" value="ATP-DEPENDENT PROTEASE ATPASE SUBUNIT HSLU"/>
    <property type="match status" value="1"/>
</dbReference>
<dbReference type="Pfam" id="PF00004">
    <property type="entry name" value="AAA"/>
    <property type="match status" value="1"/>
</dbReference>
<dbReference type="Pfam" id="PF07724">
    <property type="entry name" value="AAA_2"/>
    <property type="match status" value="1"/>
</dbReference>
<dbReference type="SMART" id="SM00382">
    <property type="entry name" value="AAA"/>
    <property type="match status" value="1"/>
</dbReference>
<dbReference type="SMART" id="SM01086">
    <property type="entry name" value="ClpB_D2-small"/>
    <property type="match status" value="1"/>
</dbReference>
<dbReference type="SUPFAM" id="SSF52540">
    <property type="entry name" value="P-loop containing nucleoside triphosphate hydrolases"/>
    <property type="match status" value="1"/>
</dbReference>